<organism>
    <name type="scientific">Bacillus cereus (strain ATCC 14579 / DSM 31 / CCUG 7414 / JCM 2152 / NBRC 15305 / NCIMB 9373 / NCTC 2599 / NRRL B-3711)</name>
    <dbReference type="NCBI Taxonomy" id="226900"/>
    <lineage>
        <taxon>Bacteria</taxon>
        <taxon>Bacillati</taxon>
        <taxon>Bacillota</taxon>
        <taxon>Bacilli</taxon>
        <taxon>Bacillales</taxon>
        <taxon>Bacillaceae</taxon>
        <taxon>Bacillus</taxon>
        <taxon>Bacillus cereus group</taxon>
    </lineage>
</organism>
<accession>Q818T1</accession>
<evidence type="ECO:0000255" key="1">
    <source>
        <dbReference type="HAMAP-Rule" id="MF_00542"/>
    </source>
</evidence>
<evidence type="ECO:0000305" key="2"/>
<name>BUK_BACCR</name>
<dbReference type="EC" id="2.7.2.7" evidence="1"/>
<dbReference type="EMBL" id="AE016877">
    <property type="protein sequence ID" value="AAP11077.1"/>
    <property type="status" value="ALT_INIT"/>
    <property type="molecule type" value="Genomic_DNA"/>
</dbReference>
<dbReference type="RefSeq" id="NP_833876.1">
    <property type="nucleotide sequence ID" value="NC_004722.1"/>
</dbReference>
<dbReference type="RefSeq" id="WP_000115781.1">
    <property type="nucleotide sequence ID" value="NZ_CP138336.1"/>
</dbReference>
<dbReference type="SMR" id="Q818T1"/>
<dbReference type="STRING" id="226900.BC_4161"/>
<dbReference type="GeneID" id="67468468"/>
<dbReference type="KEGG" id="bce:BC4161"/>
<dbReference type="PATRIC" id="fig|226900.8.peg.4301"/>
<dbReference type="HOGENOM" id="CLU_048716_0_0_9"/>
<dbReference type="OrthoDB" id="9771859at2"/>
<dbReference type="Proteomes" id="UP000001417">
    <property type="component" value="Chromosome"/>
</dbReference>
<dbReference type="GO" id="GO:0005737">
    <property type="term" value="C:cytoplasm"/>
    <property type="evidence" value="ECO:0007669"/>
    <property type="project" value="UniProtKB-SubCell"/>
</dbReference>
<dbReference type="GO" id="GO:0008776">
    <property type="term" value="F:acetate kinase activity"/>
    <property type="evidence" value="ECO:0000318"/>
    <property type="project" value="GO_Central"/>
</dbReference>
<dbReference type="GO" id="GO:0005524">
    <property type="term" value="F:ATP binding"/>
    <property type="evidence" value="ECO:0007669"/>
    <property type="project" value="UniProtKB-KW"/>
</dbReference>
<dbReference type="GO" id="GO:0047761">
    <property type="term" value="F:butyrate kinase activity"/>
    <property type="evidence" value="ECO:0007669"/>
    <property type="project" value="UniProtKB-UniRule"/>
</dbReference>
<dbReference type="GO" id="GO:0006083">
    <property type="term" value="P:acetate metabolic process"/>
    <property type="evidence" value="ECO:0000318"/>
    <property type="project" value="GO_Central"/>
</dbReference>
<dbReference type="CDD" id="cd24011">
    <property type="entry name" value="ASKHA_NBD_BK"/>
    <property type="match status" value="1"/>
</dbReference>
<dbReference type="Gene3D" id="3.30.420.40">
    <property type="match status" value="2"/>
</dbReference>
<dbReference type="HAMAP" id="MF_00542">
    <property type="entry name" value="Butyrate_kinase"/>
    <property type="match status" value="1"/>
</dbReference>
<dbReference type="InterPro" id="IPR000890">
    <property type="entry name" value="Aliphatic_acid_kin_short-chain"/>
</dbReference>
<dbReference type="InterPro" id="IPR023865">
    <property type="entry name" value="Aliphatic_acid_kinase_CS"/>
</dbReference>
<dbReference type="InterPro" id="IPR043129">
    <property type="entry name" value="ATPase_NBD"/>
</dbReference>
<dbReference type="InterPro" id="IPR011245">
    <property type="entry name" value="Butyrate_kin"/>
</dbReference>
<dbReference type="NCBIfam" id="TIGR02707">
    <property type="entry name" value="butyr_kinase"/>
    <property type="match status" value="1"/>
</dbReference>
<dbReference type="NCBIfam" id="NF002834">
    <property type="entry name" value="PRK03011.1-5"/>
    <property type="match status" value="1"/>
</dbReference>
<dbReference type="PANTHER" id="PTHR21060">
    <property type="entry name" value="ACETATE KINASE"/>
    <property type="match status" value="1"/>
</dbReference>
<dbReference type="PANTHER" id="PTHR21060:SF3">
    <property type="entry name" value="BUTYRATE KINASE 2-RELATED"/>
    <property type="match status" value="1"/>
</dbReference>
<dbReference type="Pfam" id="PF00871">
    <property type="entry name" value="Acetate_kinase"/>
    <property type="match status" value="1"/>
</dbReference>
<dbReference type="PIRSF" id="PIRSF036458">
    <property type="entry name" value="Butyrate_kin"/>
    <property type="match status" value="1"/>
</dbReference>
<dbReference type="PRINTS" id="PR00471">
    <property type="entry name" value="ACETATEKNASE"/>
</dbReference>
<dbReference type="SUPFAM" id="SSF53067">
    <property type="entry name" value="Actin-like ATPase domain"/>
    <property type="match status" value="2"/>
</dbReference>
<dbReference type="PROSITE" id="PS01075">
    <property type="entry name" value="ACETATE_KINASE_1"/>
    <property type="match status" value="1"/>
</dbReference>
<dbReference type="PROSITE" id="PS01076">
    <property type="entry name" value="ACETATE_KINASE_2"/>
    <property type="match status" value="1"/>
</dbReference>
<comment type="catalytic activity">
    <reaction evidence="1">
        <text>butanoate + ATP = butanoyl phosphate + ADP</text>
        <dbReference type="Rhea" id="RHEA:13585"/>
        <dbReference type="ChEBI" id="CHEBI:17968"/>
        <dbReference type="ChEBI" id="CHEBI:30616"/>
        <dbReference type="ChEBI" id="CHEBI:58079"/>
        <dbReference type="ChEBI" id="CHEBI:456216"/>
        <dbReference type="EC" id="2.7.2.7"/>
    </reaction>
</comment>
<comment type="subcellular location">
    <subcellularLocation>
        <location evidence="1">Cytoplasm</location>
    </subcellularLocation>
</comment>
<comment type="similarity">
    <text evidence="1">Belongs to the acetokinase family.</text>
</comment>
<comment type="sequence caution" evidence="2">
    <conflict type="erroneous initiation">
        <sequence resource="EMBL-CDS" id="AAP11077"/>
    </conflict>
</comment>
<keyword id="KW-0067">ATP-binding</keyword>
<keyword id="KW-0963">Cytoplasm</keyword>
<keyword id="KW-0418">Kinase</keyword>
<keyword id="KW-0547">Nucleotide-binding</keyword>
<keyword id="KW-1185">Reference proteome</keyword>
<keyword id="KW-0808">Transferase</keyword>
<protein>
    <recommendedName>
        <fullName evidence="1">Probable butyrate kinase</fullName>
        <shortName evidence="1">BK</shortName>
        <ecNumber evidence="1">2.7.2.7</ecNumber>
    </recommendedName>
    <alternativeName>
        <fullName evidence="1">Branched-chain carboxylic acid kinase</fullName>
    </alternativeName>
</protein>
<proteinExistence type="inferred from homology"/>
<feature type="chain" id="PRO_0000107664" description="Probable butyrate kinase">
    <location>
        <begin position="1"/>
        <end position="367"/>
    </location>
</feature>
<sequence>MSVNRILVINPGSTSTKIGVFDNERPVLEETIRHDVEQIGKYKRIIDQYEFRKETILEVLHSHGINISKLNAVCGRGGLLRPIEGGTYTVNDAMLEDLKNGFSGHHASNLGGILAYEIASGLNIPAFIVDPVVVDEMEPVARISGIAGMERKSIFHALNQKAVARKVAEQLNHKYEDLNLLVTHMGGGITVGAHKKGRVIDVNNGLNGEGPFSPERAGTVPVGQLVEMCFSGEYYRDEMIKKLVGQGGLVSLIGTNDAIKVEQMVEKGDPEATLIYKAMAYQVAKEIGGASAVLHGKIDAIVLTGGLAYSKILVDEIKERVDWIADVIVHPGEDELEALAEGALRVLREEEAPKEYVVREKETVARG</sequence>
<reference key="1">
    <citation type="journal article" date="2003" name="Nature">
        <title>Genome sequence of Bacillus cereus and comparative analysis with Bacillus anthracis.</title>
        <authorList>
            <person name="Ivanova N."/>
            <person name="Sorokin A."/>
            <person name="Anderson I."/>
            <person name="Galleron N."/>
            <person name="Candelon B."/>
            <person name="Kapatral V."/>
            <person name="Bhattacharyya A."/>
            <person name="Reznik G."/>
            <person name="Mikhailova N."/>
            <person name="Lapidus A."/>
            <person name="Chu L."/>
            <person name="Mazur M."/>
            <person name="Goltsman E."/>
            <person name="Larsen N."/>
            <person name="D'Souza M."/>
            <person name="Walunas T."/>
            <person name="Grechkin Y."/>
            <person name="Pusch G."/>
            <person name="Haselkorn R."/>
            <person name="Fonstein M."/>
            <person name="Ehrlich S.D."/>
            <person name="Overbeek R."/>
            <person name="Kyrpides N.C."/>
        </authorList>
    </citation>
    <scope>NUCLEOTIDE SEQUENCE [LARGE SCALE GENOMIC DNA]</scope>
    <source>
        <strain>ATCC 14579 / DSM 31 / CCUG 7414 / JCM 2152 / NBRC 15305 / NCIMB 9373 / NCTC 2599 / NRRL B-3711</strain>
    </source>
</reference>
<gene>
    <name evidence="1" type="primary">buk</name>
    <name type="ordered locus">BC_4161</name>
</gene>